<evidence type="ECO:0000255" key="1">
    <source>
        <dbReference type="HAMAP-Rule" id="MF_01227"/>
    </source>
</evidence>
<accession>B1IU61</accession>
<dbReference type="EC" id="6.3.4.2" evidence="1"/>
<dbReference type="EMBL" id="CP000946">
    <property type="protein sequence ID" value="ACA76601.1"/>
    <property type="molecule type" value="Genomic_DNA"/>
</dbReference>
<dbReference type="RefSeq" id="WP_000210878.1">
    <property type="nucleotide sequence ID" value="NZ_MTFT01000004.1"/>
</dbReference>
<dbReference type="SMR" id="B1IU61"/>
<dbReference type="MEROPS" id="C26.964"/>
<dbReference type="GeneID" id="93779218"/>
<dbReference type="KEGG" id="ecl:EcolC_0932"/>
<dbReference type="HOGENOM" id="CLU_011675_5_0_6"/>
<dbReference type="UniPathway" id="UPA00159">
    <property type="reaction ID" value="UER00277"/>
</dbReference>
<dbReference type="GO" id="GO:0005829">
    <property type="term" value="C:cytosol"/>
    <property type="evidence" value="ECO:0007669"/>
    <property type="project" value="TreeGrafter"/>
</dbReference>
<dbReference type="GO" id="GO:0005524">
    <property type="term" value="F:ATP binding"/>
    <property type="evidence" value="ECO:0007669"/>
    <property type="project" value="UniProtKB-KW"/>
</dbReference>
<dbReference type="GO" id="GO:0003883">
    <property type="term" value="F:CTP synthase activity"/>
    <property type="evidence" value="ECO:0007669"/>
    <property type="project" value="UniProtKB-UniRule"/>
</dbReference>
<dbReference type="GO" id="GO:0004359">
    <property type="term" value="F:glutaminase activity"/>
    <property type="evidence" value="ECO:0007669"/>
    <property type="project" value="RHEA"/>
</dbReference>
<dbReference type="GO" id="GO:0042802">
    <property type="term" value="F:identical protein binding"/>
    <property type="evidence" value="ECO:0007669"/>
    <property type="project" value="TreeGrafter"/>
</dbReference>
<dbReference type="GO" id="GO:0046872">
    <property type="term" value="F:metal ion binding"/>
    <property type="evidence" value="ECO:0007669"/>
    <property type="project" value="UniProtKB-KW"/>
</dbReference>
<dbReference type="GO" id="GO:0044210">
    <property type="term" value="P:'de novo' CTP biosynthetic process"/>
    <property type="evidence" value="ECO:0007669"/>
    <property type="project" value="UniProtKB-UniRule"/>
</dbReference>
<dbReference type="GO" id="GO:0019856">
    <property type="term" value="P:pyrimidine nucleobase biosynthetic process"/>
    <property type="evidence" value="ECO:0007669"/>
    <property type="project" value="TreeGrafter"/>
</dbReference>
<dbReference type="CDD" id="cd03113">
    <property type="entry name" value="CTPS_N"/>
    <property type="match status" value="1"/>
</dbReference>
<dbReference type="CDD" id="cd01746">
    <property type="entry name" value="GATase1_CTP_Synthase"/>
    <property type="match status" value="1"/>
</dbReference>
<dbReference type="FunFam" id="3.40.50.300:FF:000009">
    <property type="entry name" value="CTP synthase"/>
    <property type="match status" value="1"/>
</dbReference>
<dbReference type="FunFam" id="3.40.50.880:FF:000002">
    <property type="entry name" value="CTP synthase"/>
    <property type="match status" value="1"/>
</dbReference>
<dbReference type="Gene3D" id="3.40.50.880">
    <property type="match status" value="1"/>
</dbReference>
<dbReference type="Gene3D" id="3.40.50.300">
    <property type="entry name" value="P-loop containing nucleotide triphosphate hydrolases"/>
    <property type="match status" value="1"/>
</dbReference>
<dbReference type="HAMAP" id="MF_01227">
    <property type="entry name" value="PyrG"/>
    <property type="match status" value="1"/>
</dbReference>
<dbReference type="InterPro" id="IPR029062">
    <property type="entry name" value="Class_I_gatase-like"/>
</dbReference>
<dbReference type="InterPro" id="IPR004468">
    <property type="entry name" value="CTP_synthase"/>
</dbReference>
<dbReference type="InterPro" id="IPR017456">
    <property type="entry name" value="CTP_synthase_N"/>
</dbReference>
<dbReference type="InterPro" id="IPR017926">
    <property type="entry name" value="GATASE"/>
</dbReference>
<dbReference type="InterPro" id="IPR033828">
    <property type="entry name" value="GATase1_CTP_Synthase"/>
</dbReference>
<dbReference type="InterPro" id="IPR027417">
    <property type="entry name" value="P-loop_NTPase"/>
</dbReference>
<dbReference type="NCBIfam" id="NF003792">
    <property type="entry name" value="PRK05380.1"/>
    <property type="match status" value="1"/>
</dbReference>
<dbReference type="NCBIfam" id="TIGR00337">
    <property type="entry name" value="PyrG"/>
    <property type="match status" value="1"/>
</dbReference>
<dbReference type="PANTHER" id="PTHR11550">
    <property type="entry name" value="CTP SYNTHASE"/>
    <property type="match status" value="1"/>
</dbReference>
<dbReference type="PANTHER" id="PTHR11550:SF0">
    <property type="entry name" value="CTP SYNTHASE-RELATED"/>
    <property type="match status" value="1"/>
</dbReference>
<dbReference type="Pfam" id="PF06418">
    <property type="entry name" value="CTP_synth_N"/>
    <property type="match status" value="1"/>
</dbReference>
<dbReference type="Pfam" id="PF00117">
    <property type="entry name" value="GATase"/>
    <property type="match status" value="1"/>
</dbReference>
<dbReference type="SUPFAM" id="SSF52317">
    <property type="entry name" value="Class I glutamine amidotransferase-like"/>
    <property type="match status" value="1"/>
</dbReference>
<dbReference type="SUPFAM" id="SSF52540">
    <property type="entry name" value="P-loop containing nucleoside triphosphate hydrolases"/>
    <property type="match status" value="1"/>
</dbReference>
<dbReference type="PROSITE" id="PS51273">
    <property type="entry name" value="GATASE_TYPE_1"/>
    <property type="match status" value="1"/>
</dbReference>
<organism>
    <name type="scientific">Escherichia coli (strain ATCC 8739 / DSM 1576 / NBRC 3972 / NCIMB 8545 / WDCM 00012 / Crooks)</name>
    <dbReference type="NCBI Taxonomy" id="481805"/>
    <lineage>
        <taxon>Bacteria</taxon>
        <taxon>Pseudomonadati</taxon>
        <taxon>Pseudomonadota</taxon>
        <taxon>Gammaproteobacteria</taxon>
        <taxon>Enterobacterales</taxon>
        <taxon>Enterobacteriaceae</taxon>
        <taxon>Escherichia</taxon>
    </lineage>
</organism>
<keyword id="KW-0067">ATP-binding</keyword>
<keyword id="KW-0315">Glutamine amidotransferase</keyword>
<keyword id="KW-0436">Ligase</keyword>
<keyword id="KW-0460">Magnesium</keyword>
<keyword id="KW-0479">Metal-binding</keyword>
<keyword id="KW-0547">Nucleotide-binding</keyword>
<keyword id="KW-0665">Pyrimidine biosynthesis</keyword>
<gene>
    <name evidence="1" type="primary">pyrG</name>
    <name type="ordered locus">EcolC_0932</name>
</gene>
<sequence length="545" mass="60374">MTTNYIFVTGGVVSSLGKGIAAASLAAILEARGLNVTIMKLDPYINVDPGTMSPIQHGEVFVTEDGAETDLDLGHYERFIRTKMSRRNNFTTGRIYSDVLRKERRGDYLGATVQVIPHITNAIKERVLEGGEGHDVVLVEIGGTVGDIESLPFLEAIRQMAVEIGREHTLFMHLTLVPYMAASGEVKTKPTQHSVKELLSIGIQPDILICRSDRAVPANERAKIALFCNVPEKAVISLKDVDSIYKIPGLLKSQGLDDYICKRFSLNCPEANLSEWEQVIFEEANPVSEVTIGMVGKYIELPDAYKSVIEALKHGGLKNRVSVNIKLIDSQDVETRGVEILKGLDAILVPGGFGYRGVEGMITTARFARENNIPYLGICLGMQVALIDYARHVANMENANSTEFVPDCKYPVVALITEWRDENGNVEVRSEKSDLGGTMRLGAQQCQLVDDSLVRQLYNAPTIVERHRHRYEVNNMLLKQIEDAGLRVAGRSGDDQLVEIIEVPNHPWFVACQFHPEFTSTPRDGHPLFAGFVKAASEFQKRQAK</sequence>
<feature type="chain" id="PRO_1000139447" description="CTP synthase">
    <location>
        <begin position="1"/>
        <end position="545"/>
    </location>
</feature>
<feature type="domain" description="Glutamine amidotransferase type-1" evidence="1">
    <location>
        <begin position="291"/>
        <end position="542"/>
    </location>
</feature>
<feature type="region of interest" description="Amidoligase domain" evidence="1">
    <location>
        <begin position="1"/>
        <end position="266"/>
    </location>
</feature>
<feature type="active site" description="Nucleophile; for glutamine hydrolysis" evidence="1">
    <location>
        <position position="379"/>
    </location>
</feature>
<feature type="active site" evidence="1">
    <location>
        <position position="515"/>
    </location>
</feature>
<feature type="active site" evidence="1">
    <location>
        <position position="517"/>
    </location>
</feature>
<feature type="binding site" evidence="1">
    <location>
        <position position="14"/>
    </location>
    <ligand>
        <name>CTP</name>
        <dbReference type="ChEBI" id="CHEBI:37563"/>
        <note>allosteric inhibitor</note>
    </ligand>
</feature>
<feature type="binding site" evidence="1">
    <location>
        <position position="14"/>
    </location>
    <ligand>
        <name>UTP</name>
        <dbReference type="ChEBI" id="CHEBI:46398"/>
    </ligand>
</feature>
<feature type="binding site" evidence="1">
    <location>
        <begin position="15"/>
        <end position="20"/>
    </location>
    <ligand>
        <name>ATP</name>
        <dbReference type="ChEBI" id="CHEBI:30616"/>
    </ligand>
</feature>
<feature type="binding site" evidence="1">
    <location>
        <position position="72"/>
    </location>
    <ligand>
        <name>ATP</name>
        <dbReference type="ChEBI" id="CHEBI:30616"/>
    </ligand>
</feature>
<feature type="binding site" evidence="1">
    <location>
        <position position="72"/>
    </location>
    <ligand>
        <name>Mg(2+)</name>
        <dbReference type="ChEBI" id="CHEBI:18420"/>
    </ligand>
</feature>
<feature type="binding site" evidence="1">
    <location>
        <position position="140"/>
    </location>
    <ligand>
        <name>Mg(2+)</name>
        <dbReference type="ChEBI" id="CHEBI:18420"/>
    </ligand>
</feature>
<feature type="binding site" evidence="1">
    <location>
        <begin position="147"/>
        <end position="149"/>
    </location>
    <ligand>
        <name>CTP</name>
        <dbReference type="ChEBI" id="CHEBI:37563"/>
        <note>allosteric inhibitor</note>
    </ligand>
</feature>
<feature type="binding site" evidence="1">
    <location>
        <begin position="187"/>
        <end position="192"/>
    </location>
    <ligand>
        <name>CTP</name>
        <dbReference type="ChEBI" id="CHEBI:37563"/>
        <note>allosteric inhibitor</note>
    </ligand>
</feature>
<feature type="binding site" evidence="1">
    <location>
        <begin position="187"/>
        <end position="192"/>
    </location>
    <ligand>
        <name>UTP</name>
        <dbReference type="ChEBI" id="CHEBI:46398"/>
    </ligand>
</feature>
<feature type="binding site" evidence="1">
    <location>
        <position position="223"/>
    </location>
    <ligand>
        <name>CTP</name>
        <dbReference type="ChEBI" id="CHEBI:37563"/>
        <note>allosteric inhibitor</note>
    </ligand>
</feature>
<feature type="binding site" evidence="1">
    <location>
        <position position="223"/>
    </location>
    <ligand>
        <name>UTP</name>
        <dbReference type="ChEBI" id="CHEBI:46398"/>
    </ligand>
</feature>
<feature type="binding site" evidence="1">
    <location>
        <begin position="239"/>
        <end position="241"/>
    </location>
    <ligand>
        <name>ATP</name>
        <dbReference type="ChEBI" id="CHEBI:30616"/>
    </ligand>
</feature>
<feature type="binding site" evidence="1">
    <location>
        <position position="352"/>
    </location>
    <ligand>
        <name>L-glutamine</name>
        <dbReference type="ChEBI" id="CHEBI:58359"/>
    </ligand>
</feature>
<feature type="binding site" evidence="1">
    <location>
        <begin position="380"/>
        <end position="383"/>
    </location>
    <ligand>
        <name>L-glutamine</name>
        <dbReference type="ChEBI" id="CHEBI:58359"/>
    </ligand>
</feature>
<feature type="binding site" evidence="1">
    <location>
        <position position="403"/>
    </location>
    <ligand>
        <name>L-glutamine</name>
        <dbReference type="ChEBI" id="CHEBI:58359"/>
    </ligand>
</feature>
<feature type="binding site" evidence="1">
    <location>
        <position position="470"/>
    </location>
    <ligand>
        <name>L-glutamine</name>
        <dbReference type="ChEBI" id="CHEBI:58359"/>
    </ligand>
</feature>
<protein>
    <recommendedName>
        <fullName evidence="1">CTP synthase</fullName>
        <ecNumber evidence="1">6.3.4.2</ecNumber>
    </recommendedName>
    <alternativeName>
        <fullName evidence="1">Cytidine 5'-triphosphate synthase</fullName>
    </alternativeName>
    <alternativeName>
        <fullName evidence="1">Cytidine triphosphate synthetase</fullName>
        <shortName evidence="1">CTP synthetase</shortName>
        <shortName evidence="1">CTPS</shortName>
    </alternativeName>
    <alternativeName>
        <fullName evidence="1">UTP--ammonia ligase</fullName>
    </alternativeName>
</protein>
<name>PYRG_ECOLC</name>
<reference key="1">
    <citation type="submission" date="2008-02" db="EMBL/GenBank/DDBJ databases">
        <title>Complete sequence of Escherichia coli C str. ATCC 8739.</title>
        <authorList>
            <person name="Copeland A."/>
            <person name="Lucas S."/>
            <person name="Lapidus A."/>
            <person name="Glavina del Rio T."/>
            <person name="Dalin E."/>
            <person name="Tice H."/>
            <person name="Bruce D."/>
            <person name="Goodwin L."/>
            <person name="Pitluck S."/>
            <person name="Kiss H."/>
            <person name="Brettin T."/>
            <person name="Detter J.C."/>
            <person name="Han C."/>
            <person name="Kuske C.R."/>
            <person name="Schmutz J."/>
            <person name="Larimer F."/>
            <person name="Land M."/>
            <person name="Hauser L."/>
            <person name="Kyrpides N."/>
            <person name="Mikhailova N."/>
            <person name="Ingram L."/>
            <person name="Richardson P."/>
        </authorList>
    </citation>
    <scope>NUCLEOTIDE SEQUENCE [LARGE SCALE GENOMIC DNA]</scope>
    <source>
        <strain>ATCC 8739 / DSM 1576 / NBRC 3972 / NCIMB 8545 / WDCM 00012 / Crooks</strain>
    </source>
</reference>
<comment type="function">
    <text evidence="1">Catalyzes the ATP-dependent amination of UTP to CTP with either L-glutamine or ammonia as the source of nitrogen. Regulates intracellular CTP levels through interactions with the four ribonucleotide triphosphates.</text>
</comment>
<comment type="catalytic activity">
    <reaction evidence="1">
        <text>UTP + L-glutamine + ATP + H2O = CTP + L-glutamate + ADP + phosphate + 2 H(+)</text>
        <dbReference type="Rhea" id="RHEA:26426"/>
        <dbReference type="ChEBI" id="CHEBI:15377"/>
        <dbReference type="ChEBI" id="CHEBI:15378"/>
        <dbReference type="ChEBI" id="CHEBI:29985"/>
        <dbReference type="ChEBI" id="CHEBI:30616"/>
        <dbReference type="ChEBI" id="CHEBI:37563"/>
        <dbReference type="ChEBI" id="CHEBI:43474"/>
        <dbReference type="ChEBI" id="CHEBI:46398"/>
        <dbReference type="ChEBI" id="CHEBI:58359"/>
        <dbReference type="ChEBI" id="CHEBI:456216"/>
        <dbReference type="EC" id="6.3.4.2"/>
    </reaction>
</comment>
<comment type="catalytic activity">
    <reaction evidence="1">
        <text>L-glutamine + H2O = L-glutamate + NH4(+)</text>
        <dbReference type="Rhea" id="RHEA:15889"/>
        <dbReference type="ChEBI" id="CHEBI:15377"/>
        <dbReference type="ChEBI" id="CHEBI:28938"/>
        <dbReference type="ChEBI" id="CHEBI:29985"/>
        <dbReference type="ChEBI" id="CHEBI:58359"/>
    </reaction>
</comment>
<comment type="catalytic activity">
    <reaction evidence="1">
        <text>UTP + NH4(+) + ATP = CTP + ADP + phosphate + 2 H(+)</text>
        <dbReference type="Rhea" id="RHEA:16597"/>
        <dbReference type="ChEBI" id="CHEBI:15378"/>
        <dbReference type="ChEBI" id="CHEBI:28938"/>
        <dbReference type="ChEBI" id="CHEBI:30616"/>
        <dbReference type="ChEBI" id="CHEBI:37563"/>
        <dbReference type="ChEBI" id="CHEBI:43474"/>
        <dbReference type="ChEBI" id="CHEBI:46398"/>
        <dbReference type="ChEBI" id="CHEBI:456216"/>
    </reaction>
</comment>
<comment type="activity regulation">
    <text evidence="1">Allosterically activated by GTP, when glutamine is the substrate; GTP has no effect on the reaction when ammonia is the substrate. The allosteric effector GTP functions by stabilizing the protein conformation that binds the tetrahedral intermediate(s) formed during glutamine hydrolysis. Inhibited by the product CTP, via allosteric rather than competitive inhibition.</text>
</comment>
<comment type="pathway">
    <text evidence="1">Pyrimidine metabolism; CTP biosynthesis via de novo pathway; CTP from UDP: step 2/2.</text>
</comment>
<comment type="subunit">
    <text evidence="1">Homotetramer.</text>
</comment>
<comment type="miscellaneous">
    <text evidence="1">CTPSs have evolved a hybrid strategy for distinguishing between UTP and CTP. The overlapping regions of the product feedback inhibitory and substrate sites recognize a common feature in both compounds, the triphosphate moiety. To differentiate isosteric substrate and product pyrimidine rings, an additional pocket far from the expected kinase/ligase catalytic site, specifically recognizes the cytosine and ribose portions of the product inhibitor.</text>
</comment>
<comment type="similarity">
    <text evidence="1">Belongs to the CTP synthase family.</text>
</comment>
<proteinExistence type="inferred from homology"/>